<name>AATC_DICDI</name>
<sequence>MSTLEKVSERIKNSLFVPIDNNNMQDSINSNEVSGQVATLFANVPLGPVDPILGVSTAFKADTDPRKVDTSVGAYRDENGKPYVLKCVFEAEKRLLGAPKEYLPIDGIPEFNKLSAKLLYGDAMVGKEKRMVTVQALSGTGALRIGIIFIRKYLPAGTVVYISRPSWTNHHNICKESGVQSAEYAYYDPKTKGLDFTGMINDMRAAPNGSVFVLHLCAHNPTGVDPTHEQWNIIADVMREKNHIPFMDCAYQGYASGDLDYDAYSARLFLNRGFEMFSAQSYSKNFGLYGERTGALTIVSHREDVIPKMLSQLKMDIRAMYSSPPTHGARLVTTVLSDPELTALWVKELKEMSGRIKDVRQKVLDALIARKVPGNWEHIVNQIGMFTYTGLTKPQVDILVNKYHIYLLGSGRVSLAGLNNKNIDYFADAILDAVTSTQ</sequence>
<keyword id="KW-0032">Aminotransferase</keyword>
<keyword id="KW-0963">Cytoplasm</keyword>
<keyword id="KW-0663">Pyridoxal phosphate</keyword>
<keyword id="KW-1185">Reference proteome</keyword>
<keyword id="KW-0808">Transferase</keyword>
<gene>
    <name type="primary">aatB</name>
    <name type="ORF">DDB_G0282493</name>
</gene>
<reference key="1">
    <citation type="journal article" date="2005" name="Nature">
        <title>The genome of the social amoeba Dictyostelium discoideum.</title>
        <authorList>
            <person name="Eichinger L."/>
            <person name="Pachebat J.A."/>
            <person name="Gloeckner G."/>
            <person name="Rajandream M.A."/>
            <person name="Sucgang R."/>
            <person name="Berriman M."/>
            <person name="Song J."/>
            <person name="Olsen R."/>
            <person name="Szafranski K."/>
            <person name="Xu Q."/>
            <person name="Tunggal B."/>
            <person name="Kummerfeld S."/>
            <person name="Madera M."/>
            <person name="Konfortov B.A."/>
            <person name="Rivero F."/>
            <person name="Bankier A.T."/>
            <person name="Lehmann R."/>
            <person name="Hamlin N."/>
            <person name="Davies R."/>
            <person name="Gaudet P."/>
            <person name="Fey P."/>
            <person name="Pilcher K."/>
            <person name="Chen G."/>
            <person name="Saunders D."/>
            <person name="Sodergren E.J."/>
            <person name="Davis P."/>
            <person name="Kerhornou A."/>
            <person name="Nie X."/>
            <person name="Hall N."/>
            <person name="Anjard C."/>
            <person name="Hemphill L."/>
            <person name="Bason N."/>
            <person name="Farbrother P."/>
            <person name="Desany B."/>
            <person name="Just E."/>
            <person name="Morio T."/>
            <person name="Rost R."/>
            <person name="Churcher C.M."/>
            <person name="Cooper J."/>
            <person name="Haydock S."/>
            <person name="van Driessche N."/>
            <person name="Cronin A."/>
            <person name="Goodhead I."/>
            <person name="Muzny D.M."/>
            <person name="Mourier T."/>
            <person name="Pain A."/>
            <person name="Lu M."/>
            <person name="Harper D."/>
            <person name="Lindsay R."/>
            <person name="Hauser H."/>
            <person name="James K.D."/>
            <person name="Quiles M."/>
            <person name="Madan Babu M."/>
            <person name="Saito T."/>
            <person name="Buchrieser C."/>
            <person name="Wardroper A."/>
            <person name="Felder M."/>
            <person name="Thangavelu M."/>
            <person name="Johnson D."/>
            <person name="Knights A."/>
            <person name="Loulseged H."/>
            <person name="Mungall K.L."/>
            <person name="Oliver K."/>
            <person name="Price C."/>
            <person name="Quail M.A."/>
            <person name="Urushihara H."/>
            <person name="Hernandez J."/>
            <person name="Rabbinowitsch E."/>
            <person name="Steffen D."/>
            <person name="Sanders M."/>
            <person name="Ma J."/>
            <person name="Kohara Y."/>
            <person name="Sharp S."/>
            <person name="Simmonds M.N."/>
            <person name="Spiegler S."/>
            <person name="Tivey A."/>
            <person name="Sugano S."/>
            <person name="White B."/>
            <person name="Walker D."/>
            <person name="Woodward J.R."/>
            <person name="Winckler T."/>
            <person name="Tanaka Y."/>
            <person name="Shaulsky G."/>
            <person name="Schleicher M."/>
            <person name="Weinstock G.M."/>
            <person name="Rosenthal A."/>
            <person name="Cox E.C."/>
            <person name="Chisholm R.L."/>
            <person name="Gibbs R.A."/>
            <person name="Loomis W.F."/>
            <person name="Platzer M."/>
            <person name="Kay R.R."/>
            <person name="Williams J.G."/>
            <person name="Dear P.H."/>
            <person name="Noegel A.A."/>
            <person name="Barrell B.G."/>
            <person name="Kuspa A."/>
        </authorList>
    </citation>
    <scope>NUCLEOTIDE SEQUENCE [LARGE SCALE GENOMIC DNA]</scope>
    <source>
        <strain>AX4</strain>
    </source>
</reference>
<comment type="function">
    <text evidence="1">Plays a key role in amino acid metabolism.</text>
</comment>
<comment type="catalytic activity">
    <reaction>
        <text>L-aspartate + 2-oxoglutarate = oxaloacetate + L-glutamate</text>
        <dbReference type="Rhea" id="RHEA:21824"/>
        <dbReference type="ChEBI" id="CHEBI:16452"/>
        <dbReference type="ChEBI" id="CHEBI:16810"/>
        <dbReference type="ChEBI" id="CHEBI:29985"/>
        <dbReference type="ChEBI" id="CHEBI:29991"/>
        <dbReference type="EC" id="2.6.1.1"/>
    </reaction>
</comment>
<comment type="cofactor">
    <cofactor evidence="1">
        <name>pyridoxal 5'-phosphate</name>
        <dbReference type="ChEBI" id="CHEBI:597326"/>
    </cofactor>
</comment>
<comment type="subunit">
    <text evidence="1">Homodimer.</text>
</comment>
<comment type="subcellular location">
    <subcellularLocation>
        <location evidence="1">Cytoplasm</location>
    </subcellularLocation>
</comment>
<comment type="miscellaneous">
    <text>In eukaryotes there are cytoplasmic, mitochondrial and chloroplastic isozymes.</text>
</comment>
<comment type="similarity">
    <text evidence="2">Belongs to the class-I pyridoxal-phosphate-dependent aminotransferase family.</text>
</comment>
<dbReference type="EC" id="2.6.1.1"/>
<dbReference type="EMBL" id="AAFI02000047">
    <property type="protein sequence ID" value="EAL66106.1"/>
    <property type="molecule type" value="Genomic_DNA"/>
</dbReference>
<dbReference type="RefSeq" id="XP_640082.1">
    <property type="nucleotide sequence ID" value="XM_634990.1"/>
</dbReference>
<dbReference type="SMR" id="Q54SF7"/>
<dbReference type="FunCoup" id="Q54SF7">
    <property type="interactions" value="139"/>
</dbReference>
<dbReference type="STRING" id="44689.Q54SF7"/>
<dbReference type="PaxDb" id="44689-DDB0230093"/>
<dbReference type="EnsemblProtists" id="EAL66106">
    <property type="protein sequence ID" value="EAL66106"/>
    <property type="gene ID" value="DDB_G0282493"/>
</dbReference>
<dbReference type="GeneID" id="8623611"/>
<dbReference type="KEGG" id="ddi:DDB_G0282493"/>
<dbReference type="dictyBase" id="DDB_G0282493">
    <property type="gene designation" value="aatB"/>
</dbReference>
<dbReference type="VEuPathDB" id="AmoebaDB:DDB_G0282493"/>
<dbReference type="eggNOG" id="KOG1411">
    <property type="taxonomic scope" value="Eukaryota"/>
</dbReference>
<dbReference type="HOGENOM" id="CLU_032440_1_2_1"/>
<dbReference type="InParanoid" id="Q54SF7"/>
<dbReference type="OMA" id="VGACTIV"/>
<dbReference type="PhylomeDB" id="Q54SF7"/>
<dbReference type="PRO" id="PR:Q54SF7"/>
<dbReference type="Proteomes" id="UP000002195">
    <property type="component" value="Chromosome 3"/>
</dbReference>
<dbReference type="GO" id="GO:0005737">
    <property type="term" value="C:cytoplasm"/>
    <property type="evidence" value="ECO:0007669"/>
    <property type="project" value="UniProtKB-SubCell"/>
</dbReference>
<dbReference type="GO" id="GO:0004069">
    <property type="term" value="F:L-aspartate:2-oxoglutarate aminotransferase activity"/>
    <property type="evidence" value="ECO:0000250"/>
    <property type="project" value="UniProtKB"/>
</dbReference>
<dbReference type="GO" id="GO:0030170">
    <property type="term" value="F:pyridoxal phosphate binding"/>
    <property type="evidence" value="ECO:0007669"/>
    <property type="project" value="InterPro"/>
</dbReference>
<dbReference type="GO" id="GO:0006103">
    <property type="term" value="P:2-oxoglutarate metabolic process"/>
    <property type="evidence" value="ECO:0000250"/>
    <property type="project" value="UniProtKB"/>
</dbReference>
<dbReference type="GO" id="GO:0006532">
    <property type="term" value="P:aspartate biosynthetic process"/>
    <property type="evidence" value="ECO:0000250"/>
    <property type="project" value="dictyBase"/>
</dbReference>
<dbReference type="GO" id="GO:0006531">
    <property type="term" value="P:aspartate metabolic process"/>
    <property type="evidence" value="ECO:0000250"/>
    <property type="project" value="UniProtKB"/>
</dbReference>
<dbReference type="GO" id="GO:0006536">
    <property type="term" value="P:glutamate metabolic process"/>
    <property type="evidence" value="ECO:0000250"/>
    <property type="project" value="UniProtKB"/>
</dbReference>
<dbReference type="CDD" id="cd00609">
    <property type="entry name" value="AAT_like"/>
    <property type="match status" value="1"/>
</dbReference>
<dbReference type="FunFam" id="3.40.640.10:FF:000015">
    <property type="entry name" value="Aspartate aminotransferase"/>
    <property type="match status" value="1"/>
</dbReference>
<dbReference type="FunFam" id="3.90.1150.10:FF:000001">
    <property type="entry name" value="Aspartate aminotransferase"/>
    <property type="match status" value="1"/>
</dbReference>
<dbReference type="Gene3D" id="3.90.1150.10">
    <property type="entry name" value="Aspartate Aminotransferase, domain 1"/>
    <property type="match status" value="1"/>
</dbReference>
<dbReference type="Gene3D" id="3.40.640.10">
    <property type="entry name" value="Type I PLP-dependent aspartate aminotransferase-like (Major domain)"/>
    <property type="match status" value="1"/>
</dbReference>
<dbReference type="InterPro" id="IPR004839">
    <property type="entry name" value="Aminotransferase_I/II_large"/>
</dbReference>
<dbReference type="InterPro" id="IPR000796">
    <property type="entry name" value="Asp_trans"/>
</dbReference>
<dbReference type="InterPro" id="IPR015424">
    <property type="entry name" value="PyrdxlP-dep_Trfase"/>
</dbReference>
<dbReference type="InterPro" id="IPR015421">
    <property type="entry name" value="PyrdxlP-dep_Trfase_major"/>
</dbReference>
<dbReference type="InterPro" id="IPR015422">
    <property type="entry name" value="PyrdxlP-dep_Trfase_small"/>
</dbReference>
<dbReference type="NCBIfam" id="NF006719">
    <property type="entry name" value="PRK09257.1"/>
    <property type="match status" value="1"/>
</dbReference>
<dbReference type="PANTHER" id="PTHR11879">
    <property type="entry name" value="ASPARTATE AMINOTRANSFERASE"/>
    <property type="match status" value="1"/>
</dbReference>
<dbReference type="PANTHER" id="PTHR11879:SF46">
    <property type="entry name" value="ASPARTATE AMINOTRANSFERASE, CYTOPLASMIC"/>
    <property type="match status" value="1"/>
</dbReference>
<dbReference type="Pfam" id="PF00155">
    <property type="entry name" value="Aminotran_1_2"/>
    <property type="match status" value="1"/>
</dbReference>
<dbReference type="PRINTS" id="PR00799">
    <property type="entry name" value="TRANSAMINASE"/>
</dbReference>
<dbReference type="SUPFAM" id="SSF53383">
    <property type="entry name" value="PLP-dependent transferases"/>
    <property type="match status" value="1"/>
</dbReference>
<protein>
    <recommendedName>
        <fullName>Aspartate aminotransferase, cytoplasmic</fullName>
        <ecNumber>2.6.1.1</ecNumber>
    </recommendedName>
    <alternativeName>
        <fullName>Transaminase A</fullName>
    </alternativeName>
</protein>
<evidence type="ECO:0000250" key="1"/>
<evidence type="ECO:0000305" key="2"/>
<feature type="chain" id="PRO_0000327599" description="Aspartate aminotransferase, cytoplasmic">
    <location>
        <begin position="1"/>
        <end position="438"/>
    </location>
</feature>
<feature type="binding site" evidence="1">
    <location>
        <position position="73"/>
    </location>
    <ligand>
        <name>L-aspartate</name>
        <dbReference type="ChEBI" id="CHEBI:29991"/>
    </ligand>
</feature>
<feature type="binding site" evidence="1">
    <location>
        <position position="167"/>
    </location>
    <ligand>
        <name>L-aspartate</name>
        <dbReference type="ChEBI" id="CHEBI:29991"/>
    </ligand>
</feature>
<feature type="binding site" evidence="1">
    <location>
        <position position="220"/>
    </location>
    <ligand>
        <name>L-aspartate</name>
        <dbReference type="ChEBI" id="CHEBI:29991"/>
    </ligand>
</feature>
<feature type="binding site" evidence="1">
    <location>
        <position position="412"/>
    </location>
    <ligand>
        <name>L-aspartate</name>
        <dbReference type="ChEBI" id="CHEBI:29991"/>
    </ligand>
</feature>
<feature type="modified residue" description="N6-(pyridoxal phosphate)lysine" evidence="1">
    <location>
        <position position="284"/>
    </location>
</feature>
<organism>
    <name type="scientific">Dictyostelium discoideum</name>
    <name type="common">Social amoeba</name>
    <dbReference type="NCBI Taxonomy" id="44689"/>
    <lineage>
        <taxon>Eukaryota</taxon>
        <taxon>Amoebozoa</taxon>
        <taxon>Evosea</taxon>
        <taxon>Eumycetozoa</taxon>
        <taxon>Dictyostelia</taxon>
        <taxon>Dictyosteliales</taxon>
        <taxon>Dictyosteliaceae</taxon>
        <taxon>Dictyostelium</taxon>
    </lineage>
</organism>
<accession>Q54SF7</accession>
<proteinExistence type="inferred from homology"/>